<name>ALL2_PSOOV</name>
<accession>Q965E2</accession>
<keyword id="KW-0020">Allergen</keyword>
<keyword id="KW-0903">Direct protein sequencing</keyword>
<keyword id="KW-1015">Disulfide bond</keyword>
<keyword id="KW-0964">Secreted</keyword>
<keyword id="KW-0732">Signal</keyword>
<comment type="subcellular location">
    <subcellularLocation>
        <location>Secreted</location>
    </subcellularLocation>
</comment>
<comment type="allergen">
    <text>Causes an allergic reaction in human. Common symptoms of mite allergy are bronchial asthma, allergic rhinitis and conjunctivitis.</text>
</comment>
<comment type="similarity">
    <text evidence="3">Belongs to the NPC2 family.</text>
</comment>
<gene>
    <name type="primary">ALLA</name>
</gene>
<organism>
    <name type="scientific">Psoroptes ovis</name>
    <name type="common">Sheep scab mite</name>
    <dbReference type="NCBI Taxonomy" id="83912"/>
    <lineage>
        <taxon>Eukaryota</taxon>
        <taxon>Metazoa</taxon>
        <taxon>Ecdysozoa</taxon>
        <taxon>Arthropoda</taxon>
        <taxon>Chelicerata</taxon>
        <taxon>Arachnida</taxon>
        <taxon>Acari</taxon>
        <taxon>Acariformes</taxon>
        <taxon>Sarcoptiformes</taxon>
        <taxon>Astigmata</taxon>
        <taxon>Psoroptidia</taxon>
        <taxon>Sarcoptoidea</taxon>
        <taxon>Psoroptidae</taxon>
        <taxon>Psoroptes</taxon>
    </lineage>
</organism>
<reference key="1">
    <citation type="journal article" date="2002" name="J. Med. Entomol.">
        <title>Cloning and sequence analysis of a cDNA encoding Pso o II, a mite group II allergen of the sheep scab mite (Acari: Psoroptidae).</title>
        <authorList>
            <person name="Temeyer K.B."/>
            <person name="Soileau L.C."/>
            <person name="Pruett J.H."/>
        </authorList>
    </citation>
    <scope>NUCLEOTIDE SEQUENCE [MRNA]</scope>
</reference>
<reference key="2">
    <citation type="journal article" date="1999" name="J. Med. Entomol.">
        <title>Identification and purification of a 16-kDa allergen from Psoroptes ovis (Acarina: Psoroptidae).</title>
        <authorList>
            <person name="Pruett J.H."/>
        </authorList>
    </citation>
    <scope>PROTEIN SEQUENCE OF N-TERMINUS</scope>
</reference>
<evidence type="ECO:0000250" key="1"/>
<evidence type="ECO:0000269" key="2">
    <source>
    </source>
</evidence>
<evidence type="ECO:0000305" key="3"/>
<dbReference type="EMBL" id="AF187083">
    <property type="protein sequence ID" value="AAK61827.1"/>
    <property type="molecule type" value="mRNA"/>
</dbReference>
<dbReference type="SMR" id="Q965E2"/>
<dbReference type="Allergome" id="606">
    <property type="allergen name" value="Pso o 2"/>
</dbReference>
<dbReference type="GO" id="GO:0005576">
    <property type="term" value="C:extracellular region"/>
    <property type="evidence" value="ECO:0007669"/>
    <property type="project" value="UniProtKB-SubCell"/>
</dbReference>
<dbReference type="GO" id="GO:0032934">
    <property type="term" value="F:sterol binding"/>
    <property type="evidence" value="ECO:0007669"/>
    <property type="project" value="InterPro"/>
</dbReference>
<dbReference type="GO" id="GO:0015918">
    <property type="term" value="P:sterol transport"/>
    <property type="evidence" value="ECO:0007669"/>
    <property type="project" value="InterPro"/>
</dbReference>
<dbReference type="CDD" id="cd00918">
    <property type="entry name" value="Der-p2_like"/>
    <property type="match status" value="1"/>
</dbReference>
<dbReference type="FunFam" id="2.60.40.770:FF:000001">
    <property type="entry name" value="NPC intracellular cholesterol transporter 2"/>
    <property type="match status" value="1"/>
</dbReference>
<dbReference type="Gene3D" id="2.60.40.770">
    <property type="match status" value="1"/>
</dbReference>
<dbReference type="InterPro" id="IPR014756">
    <property type="entry name" value="Ig_E-set"/>
</dbReference>
<dbReference type="InterPro" id="IPR003172">
    <property type="entry name" value="ML_dom"/>
</dbReference>
<dbReference type="InterPro" id="IPR039670">
    <property type="entry name" value="NPC2-like"/>
</dbReference>
<dbReference type="PANTHER" id="PTHR11306">
    <property type="entry name" value="NIEMANN PICK TYPE C2 PROTEIN NPC2-RELATED"/>
    <property type="match status" value="1"/>
</dbReference>
<dbReference type="PANTHER" id="PTHR11306:SF68">
    <property type="entry name" value="NPC INTRACELLULAR CHOLESTEROL TRANSPORTER 2"/>
    <property type="match status" value="1"/>
</dbReference>
<dbReference type="Pfam" id="PF02221">
    <property type="entry name" value="E1_DerP2_DerF2"/>
    <property type="match status" value="1"/>
</dbReference>
<dbReference type="SMART" id="SM00737">
    <property type="entry name" value="ML"/>
    <property type="match status" value="1"/>
</dbReference>
<dbReference type="SUPFAM" id="SSF81296">
    <property type="entry name" value="E set domains"/>
    <property type="match status" value="1"/>
</dbReference>
<protein>
    <recommendedName>
        <fullName>Mite group 2 allergen Pso o 2</fullName>
    </recommendedName>
    <alternativeName>
        <fullName>Allergen Pso o A</fullName>
    </alternativeName>
    <allergenName>Pso o 2</allergenName>
</protein>
<proteinExistence type="evidence at protein level"/>
<feature type="signal peptide" evidence="2">
    <location>
        <begin position="1"/>
        <end position="17"/>
    </location>
</feature>
<feature type="chain" id="PRO_0000019864" description="Mite group 2 allergen Pso o 2">
    <location>
        <begin position="18"/>
        <end position="143"/>
    </location>
</feature>
<feature type="disulfide bond" evidence="1">
    <location>
        <begin position="25"/>
        <end position="134"/>
    </location>
</feature>
<feature type="disulfide bond" evidence="1">
    <location>
        <begin position="38"/>
        <end position="43"/>
    </location>
</feature>
<feature type="disulfide bond" evidence="1">
    <location>
        <begin position="89"/>
        <end position="94"/>
    </location>
</feature>
<sequence length="143" mass="15212">MMKTLVVLAITLAVVSAGKVKFQDCGKGEVESLEVEGCSGDYCVIHKGKKLDLAISVTSNQDSANLKLDIVADINGVQIEVPGVDHDGCHYVKCPIKKGQHFDVKYTYSIPAILPTTKAKIIAKIIGDKGLGGCIVINGEIQD</sequence>